<reference key="1">
    <citation type="journal article" date="2003" name="Nature">
        <title>The genome sequence of the filamentous fungus Neurospora crassa.</title>
        <authorList>
            <person name="Galagan J.E."/>
            <person name="Calvo S.E."/>
            <person name="Borkovich K.A."/>
            <person name="Selker E.U."/>
            <person name="Read N.D."/>
            <person name="Jaffe D.B."/>
            <person name="FitzHugh W."/>
            <person name="Ma L.-J."/>
            <person name="Smirnov S."/>
            <person name="Purcell S."/>
            <person name="Rehman B."/>
            <person name="Elkins T."/>
            <person name="Engels R."/>
            <person name="Wang S."/>
            <person name="Nielsen C.B."/>
            <person name="Butler J."/>
            <person name="Endrizzi M."/>
            <person name="Qui D."/>
            <person name="Ianakiev P."/>
            <person name="Bell-Pedersen D."/>
            <person name="Nelson M.A."/>
            <person name="Werner-Washburne M."/>
            <person name="Selitrennikoff C.P."/>
            <person name="Kinsey J.A."/>
            <person name="Braun E.L."/>
            <person name="Zelter A."/>
            <person name="Schulte U."/>
            <person name="Kothe G.O."/>
            <person name="Jedd G."/>
            <person name="Mewes H.-W."/>
            <person name="Staben C."/>
            <person name="Marcotte E."/>
            <person name="Greenberg D."/>
            <person name="Roy A."/>
            <person name="Foley K."/>
            <person name="Naylor J."/>
            <person name="Stange-Thomann N."/>
            <person name="Barrett R."/>
            <person name="Gnerre S."/>
            <person name="Kamal M."/>
            <person name="Kamvysselis M."/>
            <person name="Mauceli E.W."/>
            <person name="Bielke C."/>
            <person name="Rudd S."/>
            <person name="Frishman D."/>
            <person name="Krystofova S."/>
            <person name="Rasmussen C."/>
            <person name="Metzenberg R.L."/>
            <person name="Perkins D.D."/>
            <person name="Kroken S."/>
            <person name="Cogoni C."/>
            <person name="Macino G."/>
            <person name="Catcheside D.E.A."/>
            <person name="Li W."/>
            <person name="Pratt R.J."/>
            <person name="Osmani S.A."/>
            <person name="DeSouza C.P.C."/>
            <person name="Glass N.L."/>
            <person name="Orbach M.J."/>
            <person name="Berglund J.A."/>
            <person name="Voelker R."/>
            <person name="Yarden O."/>
            <person name="Plamann M."/>
            <person name="Seiler S."/>
            <person name="Dunlap J.C."/>
            <person name="Radford A."/>
            <person name="Aramayo R."/>
            <person name="Natvig D.O."/>
            <person name="Alex L.A."/>
            <person name="Mannhaupt G."/>
            <person name="Ebbole D.J."/>
            <person name="Freitag M."/>
            <person name="Paulsen I."/>
            <person name="Sachs M.S."/>
            <person name="Lander E.S."/>
            <person name="Nusbaum C."/>
            <person name="Birren B.W."/>
        </authorList>
    </citation>
    <scope>NUCLEOTIDE SEQUENCE [LARGE SCALE GENOMIC DNA]</scope>
    <source>
        <strain>ATCC 24698 / 74-OR23-1A / CBS 708.71 / DSM 1257 / FGSC 987</strain>
    </source>
</reference>
<name>TIM21_NEUCR</name>
<organism>
    <name type="scientific">Neurospora crassa (strain ATCC 24698 / 74-OR23-1A / CBS 708.71 / DSM 1257 / FGSC 987)</name>
    <dbReference type="NCBI Taxonomy" id="367110"/>
    <lineage>
        <taxon>Eukaryota</taxon>
        <taxon>Fungi</taxon>
        <taxon>Dikarya</taxon>
        <taxon>Ascomycota</taxon>
        <taxon>Pezizomycotina</taxon>
        <taxon>Sordariomycetes</taxon>
        <taxon>Sordariomycetidae</taxon>
        <taxon>Sordariales</taxon>
        <taxon>Sordariaceae</taxon>
        <taxon>Neurospora</taxon>
    </lineage>
</organism>
<sequence length="251" mass="27798">MMKMLTGTSAGVRLLLSPAVVRQQATITTAASRALPPTAASVILVSSRRQYATTQESSKRRSVTPFNDDGHVPWTRLSTGEKAGRAVQQTFNFGLVILGVVLTGGIAYLLFTDVFSPESKTAYFNRAVDRIRADPRCVALLSPGDPKKIAAHGEETHNKWRRARPIAATVEKDNRGVEHLKMHFHVEGPRGSGVVGLHLTKQPGHWEHEYQTFYVDVRGHQRIYLENKEAEVAAAKKGGNKEFKFLGVKWN</sequence>
<keyword id="KW-0472">Membrane</keyword>
<keyword id="KW-0496">Mitochondrion</keyword>
<keyword id="KW-0999">Mitochondrion inner membrane</keyword>
<keyword id="KW-0653">Protein transport</keyword>
<keyword id="KW-1185">Reference proteome</keyword>
<keyword id="KW-0809">Transit peptide</keyword>
<keyword id="KW-0811">Translocation</keyword>
<keyword id="KW-0812">Transmembrane</keyword>
<keyword id="KW-1133">Transmembrane helix</keyword>
<keyword id="KW-0813">Transport</keyword>
<protein>
    <recommendedName>
        <fullName>Mitochondrial import inner membrane translocase subunit tim21</fullName>
    </recommendedName>
</protein>
<comment type="function">
    <text evidence="1">Essential component of the TIM23 complex, a complex that mediates the translocation of transit peptide-containing proteins across the mitochondrial inner membrane. Required to keep the TOM and the TIM23 complexes in close contact. At some point, it is released from the TOM23 complex to allow protein translocation into the mitochondrial matrix (By similarity).</text>
</comment>
<comment type="subunit">
    <text evidence="1">Component of the TIM23 complex, at least composed of tim23, tim17, tim50 and tim21.</text>
</comment>
<comment type="subcellular location">
    <subcellularLocation>
        <location evidence="1">Mitochondrion inner membrane</location>
        <topology evidence="1">Single-pass membrane protein</topology>
    </subcellularLocation>
</comment>
<comment type="similarity">
    <text evidence="3">Belongs to the TIM21 family.</text>
</comment>
<dbReference type="EMBL" id="CM002239">
    <property type="protein sequence ID" value="EAA32761.1"/>
    <property type="molecule type" value="Genomic_DNA"/>
</dbReference>
<dbReference type="RefSeq" id="XP_961997.1">
    <property type="nucleotide sequence ID" value="XM_956904.3"/>
</dbReference>
<dbReference type="SMR" id="Q7S8S5"/>
<dbReference type="FunCoup" id="Q7S8S5">
    <property type="interactions" value="238"/>
</dbReference>
<dbReference type="STRING" id="367110.Q7S8S5"/>
<dbReference type="PaxDb" id="5141-EFNCRP00000008735"/>
<dbReference type="EnsemblFungi" id="EAA32761">
    <property type="protein sequence ID" value="EAA32761"/>
    <property type="gene ID" value="NCU08810"/>
</dbReference>
<dbReference type="GeneID" id="3878145"/>
<dbReference type="KEGG" id="ncr:NCU08810"/>
<dbReference type="VEuPathDB" id="FungiDB:NCU08810"/>
<dbReference type="HOGENOM" id="CLU_089407_0_0_1"/>
<dbReference type="InParanoid" id="Q7S8S5"/>
<dbReference type="OMA" id="HFHVEGP"/>
<dbReference type="OrthoDB" id="436405at2759"/>
<dbReference type="Proteomes" id="UP000001805">
    <property type="component" value="Chromosome 4, Linkage Group IV"/>
</dbReference>
<dbReference type="GO" id="GO:0005744">
    <property type="term" value="C:TIM23 mitochondrial import inner membrane translocase complex"/>
    <property type="evidence" value="ECO:0000318"/>
    <property type="project" value="GO_Central"/>
</dbReference>
<dbReference type="GO" id="GO:0030150">
    <property type="term" value="P:protein import into mitochondrial matrix"/>
    <property type="evidence" value="ECO:0000318"/>
    <property type="project" value="GO_Central"/>
</dbReference>
<dbReference type="FunFam" id="3.10.450.320:FF:000002">
    <property type="entry name" value="Mitochondrial import inner membrane translocase subunit tim21"/>
    <property type="match status" value="1"/>
</dbReference>
<dbReference type="Gene3D" id="3.10.450.320">
    <property type="entry name" value="Mitochondrial import inner membrane translocase subunit Tim21"/>
    <property type="match status" value="1"/>
</dbReference>
<dbReference type="InterPro" id="IPR013261">
    <property type="entry name" value="Tim21"/>
</dbReference>
<dbReference type="InterPro" id="IPR038552">
    <property type="entry name" value="Tim21_IMS_sf"/>
</dbReference>
<dbReference type="PANTHER" id="PTHR13032">
    <property type="entry name" value="MITOCHONDRIAL IMPORT INNER MEMBRANE TRANSLOCASE SUBUNIT TIM21"/>
    <property type="match status" value="1"/>
</dbReference>
<dbReference type="PANTHER" id="PTHR13032:SF6">
    <property type="entry name" value="MITOCHONDRIAL IMPORT INNER MEMBRANE TRANSLOCASE SUBUNIT TIM21"/>
    <property type="match status" value="1"/>
</dbReference>
<dbReference type="Pfam" id="PF08294">
    <property type="entry name" value="TIM21"/>
    <property type="match status" value="1"/>
</dbReference>
<gene>
    <name type="primary">tim21</name>
    <name type="ORF">NCU08810</name>
</gene>
<feature type="transit peptide" description="Mitochondrion" evidence="2">
    <location>
        <begin position="1"/>
        <end position="51"/>
    </location>
</feature>
<feature type="chain" id="PRO_0000043147" description="Mitochondrial import inner membrane translocase subunit tim21">
    <location>
        <begin position="52"/>
        <end position="251"/>
    </location>
</feature>
<feature type="topological domain" description="Mitochondrial matrix" evidence="2">
    <location>
        <begin position="52"/>
        <end position="90"/>
    </location>
</feature>
<feature type="transmembrane region" description="Helical" evidence="2">
    <location>
        <begin position="91"/>
        <end position="111"/>
    </location>
</feature>
<feature type="topological domain" description="Mitochondrial intermembrane" evidence="2">
    <location>
        <begin position="112"/>
        <end position="251"/>
    </location>
</feature>
<accession>Q7S8S5</accession>
<evidence type="ECO:0000250" key="1"/>
<evidence type="ECO:0000255" key="2"/>
<evidence type="ECO:0000305" key="3"/>
<proteinExistence type="inferred from homology"/>